<dbReference type="EC" id="4.6.1.12" evidence="1"/>
<dbReference type="EMBL" id="AM421808">
    <property type="protein sequence ID" value="CAM10648.1"/>
    <property type="molecule type" value="Genomic_DNA"/>
</dbReference>
<dbReference type="RefSeq" id="WP_002218386.1">
    <property type="nucleotide sequence ID" value="NC_008767.1"/>
</dbReference>
<dbReference type="SMR" id="A1KUU9"/>
<dbReference type="GeneID" id="86876398"/>
<dbReference type="KEGG" id="nmc:NMC1441"/>
<dbReference type="HOGENOM" id="CLU_084630_2_0_4"/>
<dbReference type="UniPathway" id="UPA00056">
    <property type="reaction ID" value="UER00095"/>
</dbReference>
<dbReference type="Proteomes" id="UP000002286">
    <property type="component" value="Chromosome"/>
</dbReference>
<dbReference type="GO" id="GO:0008685">
    <property type="term" value="F:2-C-methyl-D-erythritol 2,4-cyclodiphosphate synthase activity"/>
    <property type="evidence" value="ECO:0007669"/>
    <property type="project" value="UniProtKB-UniRule"/>
</dbReference>
<dbReference type="GO" id="GO:0046872">
    <property type="term" value="F:metal ion binding"/>
    <property type="evidence" value="ECO:0007669"/>
    <property type="project" value="UniProtKB-KW"/>
</dbReference>
<dbReference type="GO" id="GO:0019288">
    <property type="term" value="P:isopentenyl diphosphate biosynthetic process, methylerythritol 4-phosphate pathway"/>
    <property type="evidence" value="ECO:0007669"/>
    <property type="project" value="UniProtKB-UniRule"/>
</dbReference>
<dbReference type="GO" id="GO:0016114">
    <property type="term" value="P:terpenoid biosynthetic process"/>
    <property type="evidence" value="ECO:0007669"/>
    <property type="project" value="InterPro"/>
</dbReference>
<dbReference type="CDD" id="cd00554">
    <property type="entry name" value="MECDP_synthase"/>
    <property type="match status" value="1"/>
</dbReference>
<dbReference type="FunFam" id="3.30.1330.50:FF:000001">
    <property type="entry name" value="2-C-methyl-D-erythritol 2,4-cyclodiphosphate synthase"/>
    <property type="match status" value="1"/>
</dbReference>
<dbReference type="Gene3D" id="3.30.1330.50">
    <property type="entry name" value="2-C-methyl-D-erythritol 2,4-cyclodiphosphate synthase"/>
    <property type="match status" value="1"/>
</dbReference>
<dbReference type="HAMAP" id="MF_00107">
    <property type="entry name" value="IspF"/>
    <property type="match status" value="1"/>
</dbReference>
<dbReference type="InterPro" id="IPR003526">
    <property type="entry name" value="MECDP_synthase"/>
</dbReference>
<dbReference type="InterPro" id="IPR020555">
    <property type="entry name" value="MECDP_synthase_CS"/>
</dbReference>
<dbReference type="InterPro" id="IPR036571">
    <property type="entry name" value="MECDP_synthase_sf"/>
</dbReference>
<dbReference type="NCBIfam" id="TIGR00151">
    <property type="entry name" value="ispF"/>
    <property type="match status" value="1"/>
</dbReference>
<dbReference type="PANTHER" id="PTHR43181">
    <property type="entry name" value="2-C-METHYL-D-ERYTHRITOL 2,4-CYCLODIPHOSPHATE SYNTHASE, CHLOROPLASTIC"/>
    <property type="match status" value="1"/>
</dbReference>
<dbReference type="PANTHER" id="PTHR43181:SF1">
    <property type="entry name" value="2-C-METHYL-D-ERYTHRITOL 2,4-CYCLODIPHOSPHATE SYNTHASE, CHLOROPLASTIC"/>
    <property type="match status" value="1"/>
</dbReference>
<dbReference type="Pfam" id="PF02542">
    <property type="entry name" value="YgbB"/>
    <property type="match status" value="1"/>
</dbReference>
<dbReference type="SUPFAM" id="SSF69765">
    <property type="entry name" value="IpsF-like"/>
    <property type="match status" value="1"/>
</dbReference>
<dbReference type="PROSITE" id="PS01350">
    <property type="entry name" value="ISPF"/>
    <property type="match status" value="1"/>
</dbReference>
<organism>
    <name type="scientific">Neisseria meningitidis serogroup C / serotype 2a (strain ATCC 700532 / DSM 15464 / FAM18)</name>
    <dbReference type="NCBI Taxonomy" id="272831"/>
    <lineage>
        <taxon>Bacteria</taxon>
        <taxon>Pseudomonadati</taxon>
        <taxon>Pseudomonadota</taxon>
        <taxon>Betaproteobacteria</taxon>
        <taxon>Neisseriales</taxon>
        <taxon>Neisseriaceae</taxon>
        <taxon>Neisseria</taxon>
    </lineage>
</organism>
<keyword id="KW-0414">Isoprene biosynthesis</keyword>
<keyword id="KW-0456">Lyase</keyword>
<keyword id="KW-0479">Metal-binding</keyword>
<feature type="chain" id="PRO_1000022856" description="2-C-methyl-D-erythritol 2,4-cyclodiphosphate synthase">
    <location>
        <begin position="1"/>
        <end position="160"/>
    </location>
</feature>
<feature type="binding site" evidence="1">
    <location>
        <begin position="11"/>
        <end position="13"/>
    </location>
    <ligand>
        <name>4-CDP-2-C-methyl-D-erythritol 2-phosphate</name>
        <dbReference type="ChEBI" id="CHEBI:57919"/>
    </ligand>
</feature>
<feature type="binding site" evidence="1">
    <location>
        <position position="11"/>
    </location>
    <ligand>
        <name>a divalent metal cation</name>
        <dbReference type="ChEBI" id="CHEBI:60240"/>
    </ligand>
</feature>
<feature type="binding site" evidence="1">
    <location>
        <position position="13"/>
    </location>
    <ligand>
        <name>a divalent metal cation</name>
        <dbReference type="ChEBI" id="CHEBI:60240"/>
    </ligand>
</feature>
<feature type="binding site" evidence="1">
    <location>
        <begin position="37"/>
        <end position="38"/>
    </location>
    <ligand>
        <name>4-CDP-2-C-methyl-D-erythritol 2-phosphate</name>
        <dbReference type="ChEBI" id="CHEBI:57919"/>
    </ligand>
</feature>
<feature type="binding site" evidence="1">
    <location>
        <position position="45"/>
    </location>
    <ligand>
        <name>a divalent metal cation</name>
        <dbReference type="ChEBI" id="CHEBI:60240"/>
    </ligand>
</feature>
<feature type="binding site" evidence="1">
    <location>
        <begin position="59"/>
        <end position="61"/>
    </location>
    <ligand>
        <name>4-CDP-2-C-methyl-D-erythritol 2-phosphate</name>
        <dbReference type="ChEBI" id="CHEBI:57919"/>
    </ligand>
</feature>
<feature type="binding site" evidence="1">
    <location>
        <position position="145"/>
    </location>
    <ligand>
        <name>4-CDP-2-C-methyl-D-erythritol 2-phosphate</name>
        <dbReference type="ChEBI" id="CHEBI:57919"/>
    </ligand>
</feature>
<feature type="site" description="Transition state stabilizer" evidence="1">
    <location>
        <position position="37"/>
    </location>
</feature>
<feature type="site" description="Transition state stabilizer" evidence="1">
    <location>
        <position position="136"/>
    </location>
</feature>
<accession>A1KUU9</accession>
<gene>
    <name evidence="1" type="primary">ispF</name>
    <name type="ordered locus">NMC1441</name>
</gene>
<reference key="1">
    <citation type="journal article" date="2007" name="PLoS Genet.">
        <title>Meningococcal genetic variation mechanisms viewed through comparative analysis of serogroup C strain FAM18.</title>
        <authorList>
            <person name="Bentley S.D."/>
            <person name="Vernikos G.S."/>
            <person name="Snyder L.A.S."/>
            <person name="Churcher C."/>
            <person name="Arrowsmith C."/>
            <person name="Chillingworth T."/>
            <person name="Cronin A."/>
            <person name="Davis P.H."/>
            <person name="Holroyd N.E."/>
            <person name="Jagels K."/>
            <person name="Maddison M."/>
            <person name="Moule S."/>
            <person name="Rabbinowitsch E."/>
            <person name="Sharp S."/>
            <person name="Unwin L."/>
            <person name="Whitehead S."/>
            <person name="Quail M.A."/>
            <person name="Achtman M."/>
            <person name="Barrell B.G."/>
            <person name="Saunders N.J."/>
            <person name="Parkhill J."/>
        </authorList>
    </citation>
    <scope>NUCLEOTIDE SEQUENCE [LARGE SCALE GENOMIC DNA]</scope>
    <source>
        <strain>ATCC 700532 / DSM 15464 / FAM18</strain>
    </source>
</reference>
<comment type="function">
    <text evidence="1">Involved in the biosynthesis of isopentenyl diphosphate (IPP) and dimethylallyl diphosphate (DMAPP), two major building blocks of isoprenoid compounds. Catalyzes the conversion of 4-diphosphocytidyl-2-C-methyl-D-erythritol 2-phosphate (CDP-ME2P) to 2-C-methyl-D-erythritol 2,4-cyclodiphosphate (ME-CPP) with a corresponding release of cytidine 5-monophosphate (CMP).</text>
</comment>
<comment type="catalytic activity">
    <reaction evidence="1">
        <text>4-CDP-2-C-methyl-D-erythritol 2-phosphate = 2-C-methyl-D-erythritol 2,4-cyclic diphosphate + CMP</text>
        <dbReference type="Rhea" id="RHEA:23864"/>
        <dbReference type="ChEBI" id="CHEBI:57919"/>
        <dbReference type="ChEBI" id="CHEBI:58483"/>
        <dbReference type="ChEBI" id="CHEBI:60377"/>
        <dbReference type="EC" id="4.6.1.12"/>
    </reaction>
</comment>
<comment type="cofactor">
    <cofactor evidence="1">
        <name>a divalent metal cation</name>
        <dbReference type="ChEBI" id="CHEBI:60240"/>
    </cofactor>
    <text evidence="1">Binds 1 divalent metal cation per subunit.</text>
</comment>
<comment type="pathway">
    <text evidence="1">Isoprenoid biosynthesis; isopentenyl diphosphate biosynthesis via DXP pathway; isopentenyl diphosphate from 1-deoxy-D-xylulose 5-phosphate: step 4/6.</text>
</comment>
<comment type="subunit">
    <text evidence="1">Homotrimer.</text>
</comment>
<comment type="similarity">
    <text evidence="1">Belongs to the IspF family.</text>
</comment>
<sequence length="160" mass="17020">MTNIRIGQGYDVHQLTEGRKLILGGVEIPFEKGLLGHSDADALLHAVTDALLGAAGLGDIGSHFPDTAAEFKDADSRVLLRAAYQSVQAQGWQAVNVDTTVIAQKPKLAPHIPQMRANIAADLGIDISCVNIKGKTNEKLGYLGRMEGIEAQAAVLLVRI</sequence>
<protein>
    <recommendedName>
        <fullName evidence="1">2-C-methyl-D-erythritol 2,4-cyclodiphosphate synthase</fullName>
        <shortName evidence="1">MECDP-synthase</shortName>
        <shortName evidence="1">MECPP-synthase</shortName>
        <shortName evidence="1">MECPS</shortName>
        <ecNumber evidence="1">4.6.1.12</ecNumber>
    </recommendedName>
</protein>
<evidence type="ECO:0000255" key="1">
    <source>
        <dbReference type="HAMAP-Rule" id="MF_00107"/>
    </source>
</evidence>
<proteinExistence type="inferred from homology"/>
<name>ISPF_NEIMF</name>